<protein>
    <recommendedName>
        <fullName evidence="1">Flap endonuclease Xni</fullName>
        <shortName evidence="1">FEN</shortName>
        <ecNumber evidence="1">3.1.-.-</ecNumber>
    </recommendedName>
</protein>
<keyword id="KW-0238">DNA-binding</keyword>
<keyword id="KW-0255">Endonuclease</keyword>
<keyword id="KW-0378">Hydrolase</keyword>
<keyword id="KW-0460">Magnesium</keyword>
<keyword id="KW-0479">Metal-binding</keyword>
<keyword id="KW-0540">Nuclease</keyword>
<keyword id="KW-0630">Potassium</keyword>
<gene>
    <name evidence="1" type="primary">xni</name>
    <name evidence="1" type="synonym">ygdG</name>
    <name type="ordered locus">ECIAI1_2908</name>
</gene>
<sequence>MAVHLLIVDALNLIRRIHAVQGSPCVETCQHALDQLIMHSQPTHAVAVFDDENRSSGWRHQRLPDYKAGRPPMPEELHDEMPALRAAFEQRGVPCWSTSGNEADDLAATLAVKVTQAGHQATIVSTDKGYCQLLSPTLRIRDYFQKRWLDAPFIDKEFGVQPQQLPDYWGLAGISSSKVPGVAGIGPKSATQLLVEFQSLEGIYENLDAVAEKWRKKLETHKEMAFLCRDIARLQTDLHIDGNLQQLRLVR</sequence>
<organism>
    <name type="scientific">Escherichia coli O8 (strain IAI1)</name>
    <dbReference type="NCBI Taxonomy" id="585034"/>
    <lineage>
        <taxon>Bacteria</taxon>
        <taxon>Pseudomonadati</taxon>
        <taxon>Pseudomonadota</taxon>
        <taxon>Gammaproteobacteria</taxon>
        <taxon>Enterobacterales</taxon>
        <taxon>Enterobacteriaceae</taxon>
        <taxon>Escherichia</taxon>
    </lineage>
</organism>
<feature type="chain" id="PRO_1000138380" description="Flap endonuclease Xni">
    <location>
        <begin position="1"/>
        <end position="251"/>
    </location>
</feature>
<feature type="domain" description="5'-3' exonuclease" evidence="1">
    <location>
        <begin position="160"/>
        <end position="249"/>
    </location>
</feature>
<feature type="region of interest" description="Interaction with DNA" evidence="1">
    <location>
        <begin position="184"/>
        <end position="189"/>
    </location>
</feature>
<feature type="binding site" evidence="1">
    <location>
        <position position="104"/>
    </location>
    <ligand>
        <name>Mg(2+)</name>
        <dbReference type="ChEBI" id="CHEBI:18420"/>
    </ligand>
</feature>
<feature type="binding site" evidence="1">
    <location>
        <position position="171"/>
    </location>
    <ligand>
        <name>K(+)</name>
        <dbReference type="ChEBI" id="CHEBI:29103"/>
    </ligand>
</feature>
<feature type="binding site" evidence="1">
    <location>
        <position position="172"/>
    </location>
    <ligand>
        <name>K(+)</name>
        <dbReference type="ChEBI" id="CHEBI:29103"/>
    </ligand>
</feature>
<feature type="binding site" evidence="1">
    <location>
        <position position="180"/>
    </location>
    <ligand>
        <name>K(+)</name>
        <dbReference type="ChEBI" id="CHEBI:29103"/>
    </ligand>
</feature>
<feature type="binding site" evidence="1">
    <location>
        <position position="182"/>
    </location>
    <ligand>
        <name>K(+)</name>
        <dbReference type="ChEBI" id="CHEBI:29103"/>
    </ligand>
</feature>
<feature type="binding site" evidence="1">
    <location>
        <position position="185"/>
    </location>
    <ligand>
        <name>K(+)</name>
        <dbReference type="ChEBI" id="CHEBI:29103"/>
    </ligand>
</feature>
<name>XNI_ECO8A</name>
<reference key="1">
    <citation type="journal article" date="2009" name="PLoS Genet.">
        <title>Organised genome dynamics in the Escherichia coli species results in highly diverse adaptive paths.</title>
        <authorList>
            <person name="Touchon M."/>
            <person name="Hoede C."/>
            <person name="Tenaillon O."/>
            <person name="Barbe V."/>
            <person name="Baeriswyl S."/>
            <person name="Bidet P."/>
            <person name="Bingen E."/>
            <person name="Bonacorsi S."/>
            <person name="Bouchier C."/>
            <person name="Bouvet O."/>
            <person name="Calteau A."/>
            <person name="Chiapello H."/>
            <person name="Clermont O."/>
            <person name="Cruveiller S."/>
            <person name="Danchin A."/>
            <person name="Diard M."/>
            <person name="Dossat C."/>
            <person name="Karoui M.E."/>
            <person name="Frapy E."/>
            <person name="Garry L."/>
            <person name="Ghigo J.M."/>
            <person name="Gilles A.M."/>
            <person name="Johnson J."/>
            <person name="Le Bouguenec C."/>
            <person name="Lescat M."/>
            <person name="Mangenot S."/>
            <person name="Martinez-Jehanne V."/>
            <person name="Matic I."/>
            <person name="Nassif X."/>
            <person name="Oztas S."/>
            <person name="Petit M.A."/>
            <person name="Pichon C."/>
            <person name="Rouy Z."/>
            <person name="Ruf C.S."/>
            <person name="Schneider D."/>
            <person name="Tourret J."/>
            <person name="Vacherie B."/>
            <person name="Vallenet D."/>
            <person name="Medigue C."/>
            <person name="Rocha E.P.C."/>
            <person name="Denamur E."/>
        </authorList>
    </citation>
    <scope>NUCLEOTIDE SEQUENCE [LARGE SCALE GENOMIC DNA]</scope>
    <source>
        <strain>IAI1</strain>
    </source>
</reference>
<proteinExistence type="inferred from homology"/>
<comment type="function">
    <text evidence="1">Has flap endonuclease activity. During DNA replication, flap endonucleases cleave the 5'-overhanging flap structure that is generated by displacement synthesis when DNA polymerase encounters the 5'-end of a downstream Okazaki fragment.</text>
</comment>
<comment type="cofactor">
    <cofactor evidence="1">
        <name>Mg(2+)</name>
        <dbReference type="ChEBI" id="CHEBI:18420"/>
    </cofactor>
    <text evidence="1">Binds 2 Mg(2+) per subunit. Only one magnesium ion has a direct interaction with the protein, the other interactions are indirect.</text>
</comment>
<comment type="cofactor">
    <cofactor evidence="1">
        <name>K(+)</name>
        <dbReference type="ChEBI" id="CHEBI:29103"/>
    </cofactor>
    <text evidence="1">Binds 1 K(+) per subunit. The potassium ion strongly increases the affinity for DNA.</text>
</comment>
<comment type="similarity">
    <text evidence="1">Belongs to the Xni family.</text>
</comment>
<comment type="sequence caution" evidence="2">
    <conflict type="erroneous initiation">
        <sequence resource="EMBL-CDS" id="CAQ99726"/>
    </conflict>
    <text>Extended N-terminus.</text>
</comment>
<dbReference type="EC" id="3.1.-.-" evidence="1"/>
<dbReference type="EMBL" id="CU928160">
    <property type="protein sequence ID" value="CAQ99726.1"/>
    <property type="status" value="ALT_INIT"/>
    <property type="molecule type" value="Genomic_DNA"/>
</dbReference>
<dbReference type="RefSeq" id="WP_000268232.1">
    <property type="nucleotide sequence ID" value="NC_011741.1"/>
</dbReference>
<dbReference type="SMR" id="B7LXL4"/>
<dbReference type="GeneID" id="93779200"/>
<dbReference type="KEGG" id="ecr:ECIAI1_2908"/>
<dbReference type="HOGENOM" id="CLU_004675_1_2_6"/>
<dbReference type="GO" id="GO:0008409">
    <property type="term" value="F:5'-3' exonuclease activity"/>
    <property type="evidence" value="ECO:0007669"/>
    <property type="project" value="InterPro"/>
</dbReference>
<dbReference type="GO" id="GO:0017108">
    <property type="term" value="F:5'-flap endonuclease activity"/>
    <property type="evidence" value="ECO:0007669"/>
    <property type="project" value="UniProtKB-UniRule"/>
</dbReference>
<dbReference type="GO" id="GO:0003677">
    <property type="term" value="F:DNA binding"/>
    <property type="evidence" value="ECO:0007669"/>
    <property type="project" value="UniProtKB-UniRule"/>
</dbReference>
<dbReference type="GO" id="GO:0000287">
    <property type="term" value="F:magnesium ion binding"/>
    <property type="evidence" value="ECO:0007669"/>
    <property type="project" value="UniProtKB-UniRule"/>
</dbReference>
<dbReference type="GO" id="GO:0030955">
    <property type="term" value="F:potassium ion binding"/>
    <property type="evidence" value="ECO:0007669"/>
    <property type="project" value="UniProtKB-UniRule"/>
</dbReference>
<dbReference type="GO" id="GO:0033567">
    <property type="term" value="P:DNA replication, Okazaki fragment processing"/>
    <property type="evidence" value="ECO:0007669"/>
    <property type="project" value="UniProtKB-UniRule"/>
</dbReference>
<dbReference type="CDD" id="cd09898">
    <property type="entry name" value="H3TH_53EXO"/>
    <property type="match status" value="1"/>
</dbReference>
<dbReference type="CDD" id="cd09859">
    <property type="entry name" value="PIN_53EXO"/>
    <property type="match status" value="1"/>
</dbReference>
<dbReference type="FunFam" id="1.10.150.20:FF:000003">
    <property type="entry name" value="DNA polymerase I"/>
    <property type="match status" value="1"/>
</dbReference>
<dbReference type="FunFam" id="3.40.50.1010:FF:000011">
    <property type="entry name" value="Flap endonuclease Xni"/>
    <property type="match status" value="1"/>
</dbReference>
<dbReference type="Gene3D" id="1.10.150.20">
    <property type="entry name" value="5' to 3' exonuclease, C-terminal subdomain"/>
    <property type="match status" value="1"/>
</dbReference>
<dbReference type="Gene3D" id="3.40.50.1010">
    <property type="entry name" value="5'-nuclease"/>
    <property type="match status" value="1"/>
</dbReference>
<dbReference type="HAMAP" id="MF_01192">
    <property type="entry name" value="Xni"/>
    <property type="match status" value="1"/>
</dbReference>
<dbReference type="InterPro" id="IPR020046">
    <property type="entry name" value="5-3_exonucl_a-hlix_arch_N"/>
</dbReference>
<dbReference type="InterPro" id="IPR002421">
    <property type="entry name" value="5-3_exonuclease"/>
</dbReference>
<dbReference type="InterPro" id="IPR036279">
    <property type="entry name" value="5-3_exonuclease_C_sf"/>
</dbReference>
<dbReference type="InterPro" id="IPR020045">
    <property type="entry name" value="DNA_polI_H3TH"/>
</dbReference>
<dbReference type="InterPro" id="IPR038969">
    <property type="entry name" value="FEN"/>
</dbReference>
<dbReference type="InterPro" id="IPR008918">
    <property type="entry name" value="HhH2"/>
</dbReference>
<dbReference type="InterPro" id="IPR029060">
    <property type="entry name" value="PIN-like_dom_sf"/>
</dbReference>
<dbReference type="InterPro" id="IPR022895">
    <property type="entry name" value="Xni"/>
</dbReference>
<dbReference type="NCBIfam" id="NF007017">
    <property type="entry name" value="PRK09482.1"/>
    <property type="match status" value="1"/>
</dbReference>
<dbReference type="PANTHER" id="PTHR42646:SF2">
    <property type="entry name" value="5'-3' EXONUCLEASE FAMILY PROTEIN"/>
    <property type="match status" value="1"/>
</dbReference>
<dbReference type="PANTHER" id="PTHR42646">
    <property type="entry name" value="FLAP ENDONUCLEASE XNI"/>
    <property type="match status" value="1"/>
</dbReference>
<dbReference type="Pfam" id="PF01367">
    <property type="entry name" value="5_3_exonuc"/>
    <property type="match status" value="1"/>
</dbReference>
<dbReference type="Pfam" id="PF02739">
    <property type="entry name" value="5_3_exonuc_N"/>
    <property type="match status" value="1"/>
</dbReference>
<dbReference type="SMART" id="SM00475">
    <property type="entry name" value="53EXOc"/>
    <property type="match status" value="1"/>
</dbReference>
<dbReference type="SMART" id="SM00279">
    <property type="entry name" value="HhH2"/>
    <property type="match status" value="1"/>
</dbReference>
<dbReference type="SUPFAM" id="SSF47807">
    <property type="entry name" value="5' to 3' exonuclease, C-terminal subdomain"/>
    <property type="match status" value="1"/>
</dbReference>
<dbReference type="SUPFAM" id="SSF88723">
    <property type="entry name" value="PIN domain-like"/>
    <property type="match status" value="1"/>
</dbReference>
<evidence type="ECO:0000255" key="1">
    <source>
        <dbReference type="HAMAP-Rule" id="MF_01192"/>
    </source>
</evidence>
<evidence type="ECO:0000305" key="2"/>
<accession>B7LXL4</accession>